<reference key="1">
    <citation type="journal article" date="2001" name="DNA Res.">
        <title>Complete genomic sequence of the filamentous nitrogen-fixing cyanobacterium Anabaena sp. strain PCC 7120.</title>
        <authorList>
            <person name="Kaneko T."/>
            <person name="Nakamura Y."/>
            <person name="Wolk C.P."/>
            <person name="Kuritz T."/>
            <person name="Sasamoto S."/>
            <person name="Watanabe A."/>
            <person name="Iriguchi M."/>
            <person name="Ishikawa A."/>
            <person name="Kawashima K."/>
            <person name="Kimura T."/>
            <person name="Kishida Y."/>
            <person name="Kohara M."/>
            <person name="Matsumoto M."/>
            <person name="Matsuno A."/>
            <person name="Muraki A."/>
            <person name="Nakazaki N."/>
            <person name="Shimpo S."/>
            <person name="Sugimoto M."/>
            <person name="Takazawa M."/>
            <person name="Yamada M."/>
            <person name="Yasuda M."/>
            <person name="Tabata S."/>
        </authorList>
    </citation>
    <scope>NUCLEOTIDE SEQUENCE [LARGE SCALE GENOMIC DNA]</scope>
    <source>
        <strain>PCC 7120 / SAG 25.82 / UTEX 2576</strain>
    </source>
</reference>
<proteinExistence type="inferred from homology"/>
<sequence length="148" mass="15467">MRLNDVKPQKGSKKRRRRVGRGISAGQGASAGLGMRGQKSRSGSGTRPGFEGGQQPLYRRIPKLKGFPVVNRKIYTTINVEKLADLPANTEVTLESLRAAGILTAAKGPLKILGNGDLGVALNVKAAAFTGQARSKIEAAGGSCEVLG</sequence>
<keyword id="KW-1185">Reference proteome</keyword>
<keyword id="KW-0687">Ribonucleoprotein</keyword>
<keyword id="KW-0689">Ribosomal protein</keyword>
<keyword id="KW-0694">RNA-binding</keyword>
<keyword id="KW-0699">rRNA-binding</keyword>
<accession>Q8YPJ6</accession>
<dbReference type="EMBL" id="BA000019">
    <property type="protein sequence ID" value="BAB75897.1"/>
    <property type="molecule type" value="Genomic_DNA"/>
</dbReference>
<dbReference type="PIR" id="AG2330">
    <property type="entry name" value="AG2330"/>
</dbReference>
<dbReference type="RefSeq" id="WP_010998336.1">
    <property type="nucleotide sequence ID" value="NZ_RSCN01000010.1"/>
</dbReference>
<dbReference type="SMR" id="Q8YPJ6"/>
<dbReference type="STRING" id="103690.gene:10496247"/>
<dbReference type="KEGG" id="ana:all4198"/>
<dbReference type="eggNOG" id="COG0200">
    <property type="taxonomic scope" value="Bacteria"/>
</dbReference>
<dbReference type="OrthoDB" id="9810293at2"/>
<dbReference type="Proteomes" id="UP000002483">
    <property type="component" value="Chromosome"/>
</dbReference>
<dbReference type="GO" id="GO:0022625">
    <property type="term" value="C:cytosolic large ribosomal subunit"/>
    <property type="evidence" value="ECO:0007669"/>
    <property type="project" value="TreeGrafter"/>
</dbReference>
<dbReference type="GO" id="GO:0019843">
    <property type="term" value="F:rRNA binding"/>
    <property type="evidence" value="ECO:0007669"/>
    <property type="project" value="UniProtKB-UniRule"/>
</dbReference>
<dbReference type="GO" id="GO:0003735">
    <property type="term" value="F:structural constituent of ribosome"/>
    <property type="evidence" value="ECO:0007669"/>
    <property type="project" value="InterPro"/>
</dbReference>
<dbReference type="GO" id="GO:0006412">
    <property type="term" value="P:translation"/>
    <property type="evidence" value="ECO:0007669"/>
    <property type="project" value="UniProtKB-UniRule"/>
</dbReference>
<dbReference type="Gene3D" id="3.100.10.10">
    <property type="match status" value="1"/>
</dbReference>
<dbReference type="HAMAP" id="MF_01341">
    <property type="entry name" value="Ribosomal_uL15"/>
    <property type="match status" value="1"/>
</dbReference>
<dbReference type="InterPro" id="IPR030878">
    <property type="entry name" value="Ribosomal_uL15"/>
</dbReference>
<dbReference type="InterPro" id="IPR021131">
    <property type="entry name" value="Ribosomal_uL15/eL18"/>
</dbReference>
<dbReference type="InterPro" id="IPR036227">
    <property type="entry name" value="Ribosomal_uL15/eL18_sf"/>
</dbReference>
<dbReference type="InterPro" id="IPR005749">
    <property type="entry name" value="Ribosomal_uL15_bac-type"/>
</dbReference>
<dbReference type="InterPro" id="IPR001196">
    <property type="entry name" value="Ribosomal_uL15_CS"/>
</dbReference>
<dbReference type="NCBIfam" id="TIGR01071">
    <property type="entry name" value="rplO_bact"/>
    <property type="match status" value="1"/>
</dbReference>
<dbReference type="PANTHER" id="PTHR12934">
    <property type="entry name" value="50S RIBOSOMAL PROTEIN L15"/>
    <property type="match status" value="1"/>
</dbReference>
<dbReference type="PANTHER" id="PTHR12934:SF11">
    <property type="entry name" value="LARGE RIBOSOMAL SUBUNIT PROTEIN UL15M"/>
    <property type="match status" value="1"/>
</dbReference>
<dbReference type="Pfam" id="PF00828">
    <property type="entry name" value="Ribosomal_L27A"/>
    <property type="match status" value="1"/>
</dbReference>
<dbReference type="SUPFAM" id="SSF52080">
    <property type="entry name" value="Ribosomal proteins L15p and L18e"/>
    <property type="match status" value="1"/>
</dbReference>
<dbReference type="PROSITE" id="PS00475">
    <property type="entry name" value="RIBOSOMAL_L15"/>
    <property type="match status" value="1"/>
</dbReference>
<gene>
    <name evidence="1" type="primary">rplO</name>
    <name type="synonym">rpl15</name>
    <name type="ordered locus">all4198</name>
</gene>
<organism>
    <name type="scientific">Nostoc sp. (strain PCC 7120 / SAG 25.82 / UTEX 2576)</name>
    <dbReference type="NCBI Taxonomy" id="103690"/>
    <lineage>
        <taxon>Bacteria</taxon>
        <taxon>Bacillati</taxon>
        <taxon>Cyanobacteriota</taxon>
        <taxon>Cyanophyceae</taxon>
        <taxon>Nostocales</taxon>
        <taxon>Nostocaceae</taxon>
        <taxon>Nostoc</taxon>
    </lineage>
</organism>
<comment type="function">
    <text evidence="1">Binds to the 23S rRNA.</text>
</comment>
<comment type="subunit">
    <text evidence="1">Part of the 50S ribosomal subunit.</text>
</comment>
<comment type="similarity">
    <text evidence="1">Belongs to the universal ribosomal protein uL15 family.</text>
</comment>
<feature type="chain" id="PRO_0000104663" description="Large ribosomal subunit protein uL15">
    <location>
        <begin position="1"/>
        <end position="148"/>
    </location>
</feature>
<feature type="region of interest" description="Disordered" evidence="2">
    <location>
        <begin position="1"/>
        <end position="57"/>
    </location>
</feature>
<feature type="compositionally biased region" description="Basic residues" evidence="2">
    <location>
        <begin position="10"/>
        <end position="20"/>
    </location>
</feature>
<feature type="compositionally biased region" description="Gly residues" evidence="2">
    <location>
        <begin position="23"/>
        <end position="35"/>
    </location>
</feature>
<name>RL15_NOSS1</name>
<evidence type="ECO:0000255" key="1">
    <source>
        <dbReference type="HAMAP-Rule" id="MF_01341"/>
    </source>
</evidence>
<evidence type="ECO:0000256" key="2">
    <source>
        <dbReference type="SAM" id="MobiDB-lite"/>
    </source>
</evidence>
<evidence type="ECO:0000305" key="3"/>
<protein>
    <recommendedName>
        <fullName evidence="1">Large ribosomal subunit protein uL15</fullName>
    </recommendedName>
    <alternativeName>
        <fullName evidence="3">50S ribosomal protein L15</fullName>
    </alternativeName>
</protein>